<proteinExistence type="evidence at protein level"/>
<sequence length="493" mass="56849">MSALGVTVALLVWAAFLLLVSMWRQVHSSWNLPPGPFPLPIIGNLFQLELKNIPKSFTRLAQRFGPVFTLYVGSQRMVVMHGYKAVKEALLDYKDEFSGRGDLPAFHAHRDRGIIFNNGPTWKDIRRFSLTTLRNYGMGKQGNESRIQREAHFLLEALRKTQGQPFDPTFLIGCAPCNVIADILFRKHFDYNDEKFLRLMYLFNENFHLLSTPWLQLYNNFPSFLHYLPGSHRKVIKNVAEVKEYVSERVKEHHQSLDPNCPRDLTDCLLVEMEKEKHSAERLYTMDGITVTVADLFFAGTETTSTTLRYGLLILMKYPEIEEKLHEEIDRVIGPSRIPAIKDRQEMPYMDAVVHEIQRFITLVPSNLPHEATRDTIFRGYLIPKGTVVVPTLDSVLYDNQEFPDPEKFKPEHFLNENGKFKYSDYFKPFSTGKRVCAGEGLARMELFLLLCAILQHFNLKPLVDPKDIDLSPIHIGFGCIPPRYKLCVIPRS</sequence>
<dbReference type="EC" id="1.14.14.1" evidence="2 4"/>
<dbReference type="EC" id="1.14.13.n7" evidence="6"/>
<dbReference type="EMBL" id="J02625">
    <property type="protein sequence ID" value="AAA35743.1"/>
    <property type="molecule type" value="mRNA"/>
</dbReference>
<dbReference type="EMBL" id="J02843">
    <property type="protein sequence ID" value="AAA52155.1"/>
    <property type="molecule type" value="Genomic_DNA"/>
</dbReference>
<dbReference type="EMBL" id="AF182276">
    <property type="protein sequence ID" value="AAF13601.1"/>
    <property type="molecule type" value="mRNA"/>
</dbReference>
<dbReference type="EMBL" id="DQ515958">
    <property type="protein sequence ID" value="ABF47105.1"/>
    <property type="molecule type" value="Genomic_DNA"/>
</dbReference>
<dbReference type="EMBL" id="AL161645">
    <property type="status" value="NOT_ANNOTATED_CDS"/>
    <property type="molecule type" value="Genomic_DNA"/>
</dbReference>
<dbReference type="EMBL" id="CH471211">
    <property type="protein sequence ID" value="EAW61357.1"/>
    <property type="molecule type" value="Genomic_DNA"/>
</dbReference>
<dbReference type="EMBL" id="BC067433">
    <property type="protein sequence ID" value="AAH67433.1"/>
    <property type="molecule type" value="mRNA"/>
</dbReference>
<dbReference type="EMBL" id="AF084225">
    <property type="protein sequence ID" value="AAD13753.1"/>
    <property type="molecule type" value="mRNA"/>
</dbReference>
<dbReference type="EMBL" id="D50111">
    <property type="protein sequence ID" value="BAA08796.1"/>
    <property type="molecule type" value="Genomic_DNA"/>
</dbReference>
<dbReference type="CCDS" id="CCDS7686.1"/>
<dbReference type="PIR" id="A31949">
    <property type="entry name" value="A31949"/>
</dbReference>
<dbReference type="RefSeq" id="NP_000764.1">
    <property type="nucleotide sequence ID" value="NM_000773.4"/>
</dbReference>
<dbReference type="PDB" id="3E4E">
    <property type="method" value="X-ray"/>
    <property type="resolution" value="2.60 A"/>
    <property type="chains" value="A/B=32-493"/>
</dbReference>
<dbReference type="PDB" id="3E6I">
    <property type="method" value="X-ray"/>
    <property type="resolution" value="2.20 A"/>
    <property type="chains" value="A/B=32-493"/>
</dbReference>
<dbReference type="PDB" id="3GPH">
    <property type="method" value="X-ray"/>
    <property type="resolution" value="2.70 A"/>
    <property type="chains" value="A/B=32-493"/>
</dbReference>
<dbReference type="PDB" id="3KOH">
    <property type="method" value="X-ray"/>
    <property type="resolution" value="2.90 A"/>
    <property type="chains" value="A/B=32-493"/>
</dbReference>
<dbReference type="PDB" id="3LC4">
    <property type="method" value="X-ray"/>
    <property type="resolution" value="3.10 A"/>
    <property type="chains" value="A/B=32-493"/>
</dbReference>
<dbReference type="PDB" id="3T3Z">
    <property type="method" value="X-ray"/>
    <property type="resolution" value="2.35 A"/>
    <property type="chains" value="A/B/C/D=32-493"/>
</dbReference>
<dbReference type="PDBsum" id="3E4E"/>
<dbReference type="PDBsum" id="3E6I"/>
<dbReference type="PDBsum" id="3GPH"/>
<dbReference type="PDBsum" id="3KOH"/>
<dbReference type="PDBsum" id="3LC4"/>
<dbReference type="PDBsum" id="3T3Z"/>
<dbReference type="SMR" id="P05181"/>
<dbReference type="BioGRID" id="107944">
    <property type="interactions" value="20"/>
</dbReference>
<dbReference type="CORUM" id="P05181"/>
<dbReference type="FunCoup" id="P05181">
    <property type="interactions" value="608"/>
</dbReference>
<dbReference type="IntAct" id="P05181">
    <property type="interactions" value="12"/>
</dbReference>
<dbReference type="STRING" id="9606.ENSP00000440689"/>
<dbReference type="BindingDB" id="P05181"/>
<dbReference type="ChEMBL" id="CHEMBL5281"/>
<dbReference type="DrugBank" id="DB13963">
    <property type="generic name" value="1,2-dichlorobenzene"/>
</dbReference>
<dbReference type="DrugBank" id="DB00316">
    <property type="generic name" value="Acetaminophen"/>
</dbReference>
<dbReference type="DrugBank" id="DB00118">
    <property type="generic name" value="Ademetionine"/>
</dbReference>
<dbReference type="DrugBank" id="DB00041">
    <property type="generic name" value="Aldesleukin"/>
</dbReference>
<dbReference type="DrugBank" id="DB00918">
    <property type="generic name" value="Almotriptan"/>
</dbReference>
<dbReference type="DrugBank" id="DB00969">
    <property type="generic name" value="Alosetron"/>
</dbReference>
<dbReference type="DrugBank" id="DB01223">
    <property type="generic name" value="Aminophylline"/>
</dbReference>
<dbReference type="DrugBank" id="DB06728">
    <property type="generic name" value="Aniline"/>
</dbReference>
<dbReference type="DrugBank" id="DB01435">
    <property type="generic name" value="Antipyrine"/>
</dbReference>
<dbReference type="DrugBank" id="DB00972">
    <property type="generic name" value="Azelastine"/>
</dbReference>
<dbReference type="DrugBank" id="DB01086">
    <property type="generic name" value="Benzocaine"/>
</dbReference>
<dbReference type="DrugBank" id="DB06770">
    <property type="generic name" value="Benzyl alcohol"/>
</dbReference>
<dbReference type="DrugBank" id="DB04794">
    <property type="generic name" value="Bifonazole"/>
</dbReference>
<dbReference type="DrugBank" id="DB01558">
    <property type="generic name" value="Bromazepam"/>
</dbReference>
<dbReference type="DrugBank" id="DB01156">
    <property type="generic name" value="Bupropion"/>
</dbReference>
<dbReference type="DrugBank" id="DB00201">
    <property type="generic name" value="Caffeine"/>
</dbReference>
<dbReference type="DrugBank" id="DB09061">
    <property type="generic name" value="Cannabidiol"/>
</dbReference>
<dbReference type="DrugBank" id="DB14737">
    <property type="generic name" value="Cannabinol"/>
</dbReference>
<dbReference type="DrugBank" id="DB06774">
    <property type="generic name" value="Capsaicin"/>
</dbReference>
<dbReference type="DrugBank" id="DB06016">
    <property type="generic name" value="Cariprazine"/>
</dbReference>
<dbReference type="DrugBank" id="DB01136">
    <property type="generic name" value="Carvedilol"/>
</dbReference>
<dbReference type="DrugBank" id="DB06119">
    <property type="generic name" value="Cenobamate"/>
</dbReference>
<dbReference type="DrugBank" id="DB00477">
    <property type="generic name" value="Chlorpromazine"/>
</dbReference>
<dbReference type="DrugBank" id="DB00356">
    <property type="generic name" value="Chlorzoxazone"/>
</dbReference>
<dbReference type="DrugBank" id="DB00501">
    <property type="generic name" value="Cimetidine"/>
</dbReference>
<dbReference type="DrugBank" id="DB12499">
    <property type="generic name" value="Clascoterone"/>
</dbReference>
<dbReference type="DrugBank" id="DB04920">
    <property type="generic name" value="Clevidipine"/>
</dbReference>
<dbReference type="DrugBank" id="DB00636">
    <property type="generic name" value="Clofibrate"/>
</dbReference>
<dbReference type="DrugBank" id="DB01068">
    <property type="generic name" value="Clonazepam"/>
</dbReference>
<dbReference type="DrugBank" id="DB00257">
    <property type="generic name" value="Clotrimazole"/>
</dbReference>
<dbReference type="DrugBank" id="DB01394">
    <property type="generic name" value="Colchicine"/>
</dbReference>
<dbReference type="DrugBank" id="DB00851">
    <property type="generic name" value="Dacarbazine"/>
</dbReference>
<dbReference type="DrugBank" id="DB06637">
    <property type="generic name" value="Dalfampridine"/>
</dbReference>
<dbReference type="DrugBank" id="DB00250">
    <property type="generic name" value="Dapsone"/>
</dbReference>
<dbReference type="DrugBank" id="DB11943">
    <property type="generic name" value="Delafloxacin"/>
</dbReference>
<dbReference type="DrugBank" id="DB01189">
    <property type="generic name" value="Desflurane"/>
</dbReference>
<dbReference type="DrugBank" id="DB01151">
    <property type="generic name" value="Desipramine"/>
</dbReference>
<dbReference type="DrugBank" id="DB01234">
    <property type="generic name" value="Dexamethasone"/>
</dbReference>
<dbReference type="DrugBank" id="DB14649">
    <property type="generic name" value="Dexamethasone acetate"/>
</dbReference>
<dbReference type="DrugBank" id="DB01191">
    <property type="generic name" value="Dexfenfluramine"/>
</dbReference>
<dbReference type="DrugBank" id="DB04856">
    <property type="generic name" value="Dexloxiglumide"/>
</dbReference>
<dbReference type="DrugBank" id="DB00633">
    <property type="generic name" value="Dexmedetomidine"/>
</dbReference>
<dbReference type="DrugBank" id="DB11994">
    <property type="generic name" value="Diacerein"/>
</dbReference>
<dbReference type="DrugBank" id="DB14046">
    <property type="generic name" value="Dichlorobenzene"/>
</dbReference>
<dbReference type="DrugBank" id="DB00586">
    <property type="generic name" value="Diclofenac"/>
</dbReference>
<dbReference type="DrugBank" id="DB00255">
    <property type="generic name" value="Diethylstilbestrol"/>
</dbReference>
<dbReference type="DrugBank" id="DB08995">
    <property type="generic name" value="Diosmin"/>
</dbReference>
<dbReference type="DrugBank" id="DB00822">
    <property type="generic name" value="Disulfiram"/>
</dbReference>
<dbReference type="DrugBank" id="DB02520">
    <property type="generic name" value="Ditiocarb"/>
</dbReference>
<dbReference type="DrugBank" id="DB00869">
    <property type="generic name" value="Dorzolamide"/>
</dbReference>
<dbReference type="DrugBank" id="DB01127">
    <property type="generic name" value="Econazole"/>
</dbReference>
<dbReference type="DrugBank" id="DB08846">
    <property type="generic name" value="Ellagic acid"/>
</dbReference>
<dbReference type="DrugBank" id="DB00228">
    <property type="generic name" value="Enflurane"/>
</dbReference>
<dbReference type="DrugBank" id="DB00109">
    <property type="generic name" value="Enfuvirtide"/>
</dbReference>
<dbReference type="DrugBank" id="DB18716">
    <property type="generic name" value="Enmetazobactam"/>
</dbReference>
<dbReference type="DrugBank" id="DB00655">
    <property type="generic name" value="Estrone"/>
</dbReference>
<dbReference type="DrugBank" id="DB00330">
    <property type="generic name" value="Ethambutol"/>
</dbReference>
<dbReference type="DrugBank" id="DB00898">
    <property type="generic name" value="Ethanol"/>
</dbReference>
<dbReference type="DrugBank" id="DB00593">
    <property type="generic name" value="Ethosuximide"/>
</dbReference>
<dbReference type="DrugBank" id="DB00773">
    <property type="generic name" value="Etoposide"/>
</dbReference>
<dbReference type="DrugBank" id="DB01628">
    <property type="generic name" value="Etoricoxib"/>
</dbReference>
<dbReference type="DrugBank" id="DB12466">
    <property type="generic name" value="Favipiravir"/>
</dbReference>
<dbReference type="DrugBank" id="DB00949">
    <property type="generic name" value="Felbamate"/>
</dbReference>
<dbReference type="DrugBank" id="DB08868">
    <property type="generic name" value="Fingolimod"/>
</dbReference>
<dbReference type="DrugBank" id="DB01544">
    <property type="generic name" value="Flunitrazepam"/>
</dbReference>
<dbReference type="DrugBank" id="DB00623">
    <property type="generic name" value="Fluphenazine"/>
</dbReference>
<dbReference type="DrugBank" id="DB00690">
    <property type="generic name" value="Flurazepam"/>
</dbReference>
<dbReference type="DrugBank" id="DB01213">
    <property type="generic name" value="Fomepizole"/>
</dbReference>
<dbReference type="DrugBank" id="DB09462">
    <property type="generic name" value="Glycerin"/>
</dbReference>
<dbReference type="DrugBank" id="DB05708">
    <property type="generic name" value="GTS-21"/>
</dbReference>
<dbReference type="DrugBank" id="DB01159">
    <property type="generic name" value="Halothane"/>
</dbReference>
<dbReference type="DrugBank" id="DB00458">
    <property type="generic name" value="Imipramine"/>
</dbReference>
<dbReference type="DrugBank" id="DB06370">
    <property type="generic name" value="Indisulam"/>
</dbReference>
<dbReference type="DrugBank" id="DB00753">
    <property type="generic name" value="Isoflurane"/>
</dbReference>
<dbReference type="DrugBank" id="DB00951">
    <property type="generic name" value="Isoniazid"/>
</dbReference>
<dbReference type="DrugBank" id="DB00883">
    <property type="generic name" value="Isosorbide dinitrate"/>
</dbReference>
<dbReference type="DrugBank" id="DB01167">
    <property type="generic name" value="Itraconazole"/>
</dbReference>
<dbReference type="DrugBank" id="DB00602">
    <property type="generic name" value="Ivermectin"/>
</dbReference>
<dbReference type="DrugBank" id="DB06448">
    <property type="generic name" value="Lonafarnib"/>
</dbReference>
<dbReference type="DrugBank" id="DB14009">
    <property type="generic name" value="Medical Cannabis"/>
</dbReference>
<dbReference type="DrugBank" id="DB00170">
    <property type="generic name" value="Menadione"/>
</dbReference>
<dbReference type="DrugBank" id="DB00763">
    <property type="generic name" value="Methimazole"/>
</dbReference>
<dbReference type="DrugBank" id="DB01403">
    <property type="generic name" value="Methotrimeprazine"/>
</dbReference>
<dbReference type="DrugBank" id="DB01028">
    <property type="generic name" value="Methoxyflurane"/>
</dbReference>
<dbReference type="DrugBank" id="DB01011">
    <property type="generic name" value="Metyrapone"/>
</dbReference>
<dbReference type="DrugBank" id="DB00379">
    <property type="generic name" value="Mexiletine"/>
</dbReference>
<dbReference type="DrugBank" id="DB01110">
    <property type="generic name" value="Miconazole"/>
</dbReference>
<dbReference type="DrugBank" id="DB06595">
    <property type="generic name" value="Midostaurin"/>
</dbReference>
<dbReference type="DrugBank" id="DB01204">
    <property type="generic name" value="Mitoxantrone"/>
</dbReference>
<dbReference type="DrugBank" id="DB01844">
    <property type="generic name" value="N,N-dimethylformamide"/>
</dbReference>
<dbReference type="DrugBank" id="DB04379">
    <property type="generic name" value="N-Methyl-N-(Methylbenzyl)Formamide"/>
</dbReference>
<dbReference type="DrugBank" id="DB00486">
    <property type="generic name" value="Nabilone"/>
</dbReference>
<dbReference type="DrugBank" id="DB00627">
    <property type="generic name" value="Niacin"/>
</dbReference>
<dbReference type="DrugBank" id="DB00622">
    <property type="generic name" value="Nicardipine"/>
</dbReference>
<dbReference type="DrugBank" id="DB02701">
    <property type="generic name" value="Nicotinamide"/>
</dbReference>
<dbReference type="DrugBank" id="DB00184">
    <property type="generic name" value="Nicotine"/>
</dbReference>
<dbReference type="DrugBank" id="DB01115">
    <property type="generic name" value="Nifedipine"/>
</dbReference>
<dbReference type="DrugBank" id="DB06712">
    <property type="generic name" value="Nilvadipine"/>
</dbReference>
<dbReference type="DrugBank" id="DB01595">
    <property type="generic name" value="Nitrazepam"/>
</dbReference>
<dbReference type="DrugBank" id="DB00540">
    <property type="generic name" value="Nortriptyline"/>
</dbReference>
<dbReference type="DrugBank" id="DB00904">
    <property type="generic name" value="Ondansetron"/>
</dbReference>
<dbReference type="DrugBank" id="DB01173">
    <property type="generic name" value="Orphenadrine"/>
</dbReference>
<dbReference type="DrugBank" id="DB11837">
    <property type="generic name" value="Osilodrostat"/>
</dbReference>
<dbReference type="DrugBank" id="DB00617">
    <property type="generic name" value="Paramethadione"/>
</dbReference>
<dbReference type="DrugBank" id="DB03783">
    <property type="generic name" value="Phenacetin"/>
</dbReference>
<dbReference type="DrugBank" id="DB00780">
    <property type="generic name" value="Phenelzine"/>
</dbReference>
<dbReference type="DrugBank" id="DB01174">
    <property type="generic name" value="Phenobarbital"/>
</dbReference>
<dbReference type="DrugBank" id="DB00252">
    <property type="generic name" value="Phenytoin"/>
</dbReference>
<dbReference type="DrugBank" id="DB13941">
    <property type="generic name" value="Piperaquine"/>
</dbReference>
<dbReference type="DrugBank" id="DB04951">
    <property type="generic name" value="Pirfenidone"/>
</dbReference>
<dbReference type="DrugBank" id="DB04977">
    <property type="generic name" value="Plitidepsin"/>
</dbReference>
<dbReference type="DrugBank" id="DB00794">
    <property type="generic name" value="Primidone"/>
</dbReference>
<dbReference type="DrugBank" id="DB09288">
    <property type="generic name" value="Propacetamol"/>
</dbReference>
<dbReference type="DrugBank" id="DB00818">
    <property type="generic name" value="Propofol"/>
</dbReference>
<dbReference type="DrugBank" id="DB04216">
    <property type="generic name" value="Quercetin"/>
</dbReference>
<dbReference type="DrugBank" id="DB00908">
    <property type="generic name" value="Quinidine"/>
</dbReference>
<dbReference type="DrugBank" id="DB00468">
    <property type="generic name" value="Quinine"/>
</dbReference>
<dbReference type="DrugBank" id="DB13174">
    <property type="generic name" value="Rhein"/>
</dbReference>
<dbReference type="DrugBank" id="DB01045">
    <property type="generic name" value="Rifampin"/>
</dbReference>
<dbReference type="DrugBank" id="DB08864">
    <property type="generic name" value="Rilpivirine"/>
</dbReference>
<dbReference type="DrugBank" id="DB14840">
    <property type="generic name" value="Ripretinib"/>
</dbReference>
<dbReference type="DrugBank" id="DB00412">
    <property type="generic name" value="Rosiglitazone"/>
</dbReference>
<dbReference type="DrugBank" id="DB06201">
    <property type="generic name" value="Rufinamide"/>
</dbReference>
<dbReference type="DrugBank" id="DB11689">
    <property type="generic name" value="Selumetinib"/>
</dbReference>
<dbReference type="DrugBank" id="DB01104">
    <property type="generic name" value="Sertraline"/>
</dbReference>
<dbReference type="DrugBank" id="DB01236">
    <property type="generic name" value="Sevoflurane"/>
</dbReference>
<dbReference type="DrugBank" id="DB00203">
    <property type="generic name" value="Sildenafil"/>
</dbReference>
<dbReference type="DrugBank" id="DB00428">
    <property type="generic name" value="Streptozocin"/>
</dbReference>
<dbReference type="DrugBank" id="DB00675">
    <property type="generic name" value="Tamoxifen"/>
</dbReference>
<dbReference type="DrugBank" id="DB09256">
    <property type="generic name" value="Tegafur"/>
</dbReference>
<dbReference type="DrugBank" id="DB01079">
    <property type="generic name" value="Tegaserod"/>
</dbReference>
<dbReference type="DrugBank" id="DB01412">
    <property type="generic name" value="Theobromine"/>
</dbReference>
<dbReference type="DrugBank" id="DB00277">
    <property type="generic name" value="Theophylline"/>
</dbReference>
<dbReference type="DrugBank" id="DB01154">
    <property type="generic name" value="Thiamylal"/>
</dbReference>
<dbReference type="DrugBank" id="DB00679">
    <property type="generic name" value="Thioridazine"/>
</dbReference>
<dbReference type="DrugBank" id="DB00208">
    <property type="generic name" value="Ticlopidine"/>
</dbReference>
<dbReference type="DrugBank" id="DB01007">
    <property type="generic name" value="Tioconazole"/>
</dbReference>
<dbReference type="DrugBank" id="DB04858">
    <property type="generic name" value="Tirapazamine"/>
</dbReference>
<dbReference type="DrugBank" id="DB05109">
    <property type="generic name" value="Trabectedin"/>
</dbReference>
<dbReference type="DrugBank" id="DB00755">
    <property type="generic name" value="Tretinoin"/>
</dbReference>
<dbReference type="DrugBank" id="DB00347">
    <property type="generic name" value="Trimethadione"/>
</dbReference>
<dbReference type="DrugBank" id="DB13609">
    <property type="generic name" value="Umifenovir"/>
</dbReference>
<dbReference type="DrugBank" id="DB09328">
    <property type="generic name" value="Vayarin"/>
</dbReference>
<dbReference type="DrugBank" id="DB00661">
    <property type="generic name" value="Verapamil"/>
</dbReference>
<dbReference type="DrugBank" id="DB09120">
    <property type="generic name" value="Zucapsaicin"/>
</dbReference>
<dbReference type="DrugCentral" id="P05181"/>
<dbReference type="GuidetoPHARMACOLOGY" id="1330"/>
<dbReference type="SwissLipids" id="SLP:000001596"/>
<dbReference type="iPTMnet" id="P05181"/>
<dbReference type="PhosphoSitePlus" id="P05181"/>
<dbReference type="BioMuta" id="CYP2E1"/>
<dbReference type="DMDM" id="117250"/>
<dbReference type="jPOST" id="P05181"/>
<dbReference type="MassIVE" id="P05181"/>
<dbReference type="PaxDb" id="9606-ENSP00000440689"/>
<dbReference type="PeptideAtlas" id="P05181"/>
<dbReference type="ProteomicsDB" id="51820"/>
<dbReference type="Antibodypedia" id="2427">
    <property type="antibodies" value="649 antibodies from 38 providers"/>
</dbReference>
<dbReference type="DNASU" id="1571"/>
<dbReference type="Ensembl" id="ENST00000252945.8">
    <property type="protein sequence ID" value="ENSP00000252945.3"/>
    <property type="gene ID" value="ENSG00000130649.10"/>
</dbReference>
<dbReference type="Ensembl" id="ENST00000463117.6">
    <property type="protein sequence ID" value="ENSP00000440689.1"/>
    <property type="gene ID" value="ENSG00000130649.10"/>
</dbReference>
<dbReference type="GeneID" id="1571"/>
<dbReference type="KEGG" id="hsa:1571"/>
<dbReference type="MANE-Select" id="ENST00000252945.8">
    <property type="protein sequence ID" value="ENSP00000252945.3"/>
    <property type="RefSeq nucleotide sequence ID" value="NM_000773.4"/>
    <property type="RefSeq protein sequence ID" value="NP_000764.1"/>
</dbReference>
<dbReference type="UCSC" id="uc001lnj.1">
    <property type="organism name" value="human"/>
</dbReference>
<dbReference type="AGR" id="HGNC:2631"/>
<dbReference type="CTD" id="1571"/>
<dbReference type="DisGeNET" id="1571"/>
<dbReference type="GeneCards" id="CYP2E1"/>
<dbReference type="HGNC" id="HGNC:2631">
    <property type="gene designation" value="CYP2E1"/>
</dbReference>
<dbReference type="HPA" id="ENSG00000130649">
    <property type="expression patterns" value="Tissue enriched (liver)"/>
</dbReference>
<dbReference type="MIM" id="124040">
    <property type="type" value="gene"/>
</dbReference>
<dbReference type="neXtProt" id="NX_P05181"/>
<dbReference type="OpenTargets" id="ENSG00000130649"/>
<dbReference type="PharmGKB" id="PA129"/>
<dbReference type="VEuPathDB" id="HostDB:ENSG00000130649"/>
<dbReference type="eggNOG" id="KOG0156">
    <property type="taxonomic scope" value="Eukaryota"/>
</dbReference>
<dbReference type="GeneTree" id="ENSGT00940000161594"/>
<dbReference type="HOGENOM" id="CLU_001570_22_3_1"/>
<dbReference type="InParanoid" id="P05181"/>
<dbReference type="OMA" id="ESHRWRP"/>
<dbReference type="OrthoDB" id="1103324at2759"/>
<dbReference type="PAN-GO" id="P05181">
    <property type="GO annotations" value="8 GO annotations based on evolutionary models"/>
</dbReference>
<dbReference type="PhylomeDB" id="P05181"/>
<dbReference type="TreeFam" id="TF352043"/>
<dbReference type="BioCyc" id="MetaCyc:HS05414-MONOMER"/>
<dbReference type="PathwayCommons" id="P05181"/>
<dbReference type="Reactome" id="R-HSA-211981">
    <property type="pathway name" value="Xenobiotics"/>
</dbReference>
<dbReference type="Reactome" id="R-HSA-211999">
    <property type="pathway name" value="CYP2E1 reactions"/>
</dbReference>
<dbReference type="Reactome" id="R-HSA-9027307">
    <property type="pathway name" value="Biosynthesis of maresin-like SPMs"/>
</dbReference>
<dbReference type="Reactome" id="R-HSA-9749641">
    <property type="pathway name" value="Aspirin ADME"/>
</dbReference>
<dbReference type="Reactome" id="R-HSA-9753281">
    <property type="pathway name" value="Paracetamol ADME"/>
</dbReference>
<dbReference type="SABIO-RK" id="P05181"/>
<dbReference type="SignaLink" id="P05181"/>
<dbReference type="SIGNOR" id="P05181"/>
<dbReference type="UniPathway" id="UPA00199"/>
<dbReference type="BioGRID-ORCS" id="1571">
    <property type="hits" value="8 hits in 1144 CRISPR screens"/>
</dbReference>
<dbReference type="ChiTaRS" id="CYP2E1">
    <property type="organism name" value="human"/>
</dbReference>
<dbReference type="EvolutionaryTrace" id="P05181"/>
<dbReference type="GeneWiki" id="CYP2E1"/>
<dbReference type="GenomeRNAi" id="1571"/>
<dbReference type="Pharos" id="P05181">
    <property type="development level" value="Tchem"/>
</dbReference>
<dbReference type="PRO" id="PR:P05181"/>
<dbReference type="Proteomes" id="UP000005640">
    <property type="component" value="Chromosome 10"/>
</dbReference>
<dbReference type="RNAct" id="P05181">
    <property type="molecule type" value="protein"/>
</dbReference>
<dbReference type="Bgee" id="ENSG00000130649">
    <property type="expression patterns" value="Expressed in right lobe of liver and 151 other cell types or tissues"/>
</dbReference>
<dbReference type="ExpressionAtlas" id="P05181">
    <property type="expression patterns" value="baseline and differential"/>
</dbReference>
<dbReference type="GO" id="GO:0005737">
    <property type="term" value="C:cytoplasm"/>
    <property type="evidence" value="ECO:0000318"/>
    <property type="project" value="GO_Central"/>
</dbReference>
<dbReference type="GO" id="GO:0005789">
    <property type="term" value="C:endoplasmic reticulum membrane"/>
    <property type="evidence" value="ECO:0000304"/>
    <property type="project" value="Reactome"/>
</dbReference>
<dbReference type="GO" id="GO:0043231">
    <property type="term" value="C:intracellular membrane-bounded organelle"/>
    <property type="evidence" value="ECO:0000318"/>
    <property type="project" value="GO_Central"/>
</dbReference>
<dbReference type="GO" id="GO:0005743">
    <property type="term" value="C:mitochondrial inner membrane"/>
    <property type="evidence" value="ECO:0000250"/>
    <property type="project" value="UniProtKB"/>
</dbReference>
<dbReference type="GO" id="GO:0018601">
    <property type="term" value="F:4-nitrophenol 2-monooxygenase activity"/>
    <property type="evidence" value="ECO:0000314"/>
    <property type="project" value="UniProtKB"/>
</dbReference>
<dbReference type="GO" id="GO:0008392">
    <property type="term" value="F:arachidonate epoxygenase activity"/>
    <property type="evidence" value="ECO:0000318"/>
    <property type="project" value="GO_Central"/>
</dbReference>
<dbReference type="GO" id="GO:0019899">
    <property type="term" value="F:enzyme binding"/>
    <property type="evidence" value="ECO:0000353"/>
    <property type="project" value="BHF-UCL"/>
</dbReference>
<dbReference type="GO" id="GO:0020037">
    <property type="term" value="F:heme binding"/>
    <property type="evidence" value="ECO:0000314"/>
    <property type="project" value="UniProtKB"/>
</dbReference>
<dbReference type="GO" id="GO:0030544">
    <property type="term" value="F:Hsp70 protein binding"/>
    <property type="evidence" value="ECO:0000250"/>
    <property type="project" value="UniProtKB"/>
</dbReference>
<dbReference type="GO" id="GO:0051879">
    <property type="term" value="F:Hsp90 protein binding"/>
    <property type="evidence" value="ECO:0000250"/>
    <property type="project" value="UniProtKB"/>
</dbReference>
<dbReference type="GO" id="GO:0005506">
    <property type="term" value="F:iron ion binding"/>
    <property type="evidence" value="ECO:0007669"/>
    <property type="project" value="InterPro"/>
</dbReference>
<dbReference type="GO" id="GO:0120319">
    <property type="term" value="F:long-chain fatty acid omega-1 hydroxylase activity"/>
    <property type="evidence" value="ECO:0000314"/>
    <property type="project" value="UniProtKB"/>
</dbReference>
<dbReference type="GO" id="GO:0004497">
    <property type="term" value="F:monooxygenase activity"/>
    <property type="evidence" value="ECO:0000314"/>
    <property type="project" value="UniProtKB"/>
</dbReference>
<dbReference type="GO" id="GO:0016491">
    <property type="term" value="F:oxidoreductase activity"/>
    <property type="evidence" value="ECO:0000314"/>
    <property type="project" value="BHF-UCL"/>
</dbReference>
<dbReference type="GO" id="GO:0016709">
    <property type="term" value="F:oxidoreductase activity, acting on paired donors, with incorporation or reduction of molecular oxygen, NAD(P)H as one donor, and incorporation of one atom of oxygen"/>
    <property type="evidence" value="ECO:0000304"/>
    <property type="project" value="UniProtKB"/>
</dbReference>
<dbReference type="GO" id="GO:0016712">
    <property type="term" value="F:oxidoreductase activity, acting on paired donors, with incorporation or reduction of molecular oxygen, reduced flavin or flavoprotein as one donor, and incorporation of one atom of oxygen"/>
    <property type="evidence" value="ECO:0000318"/>
    <property type="project" value="GO_Central"/>
</dbReference>
<dbReference type="GO" id="GO:0019825">
    <property type="term" value="F:oxygen binding"/>
    <property type="evidence" value="ECO:0000304"/>
    <property type="project" value="ProtInc"/>
</dbReference>
<dbReference type="GO" id="GO:0018960">
    <property type="term" value="P:4-nitrophenol metabolic process"/>
    <property type="evidence" value="ECO:0000314"/>
    <property type="project" value="UniProtKB"/>
</dbReference>
<dbReference type="GO" id="GO:0018910">
    <property type="term" value="P:benzene metabolic process"/>
    <property type="evidence" value="ECO:0000304"/>
    <property type="project" value="Reactome"/>
</dbReference>
<dbReference type="GO" id="GO:0018885">
    <property type="term" value="P:carbon tetrachloride metabolic process"/>
    <property type="evidence" value="ECO:0000304"/>
    <property type="project" value="Reactome"/>
</dbReference>
<dbReference type="GO" id="GO:0019373">
    <property type="term" value="P:epoxygenase P450 pathway"/>
    <property type="evidence" value="ECO:0000318"/>
    <property type="project" value="GO_Central"/>
</dbReference>
<dbReference type="GO" id="GO:0042197">
    <property type="term" value="P:halogenated hydrocarbon metabolic process"/>
    <property type="evidence" value="ECO:0000304"/>
    <property type="project" value="Reactome"/>
</dbReference>
<dbReference type="GO" id="GO:0002933">
    <property type="term" value="P:lipid hydroxylation"/>
    <property type="evidence" value="ECO:0000314"/>
    <property type="project" value="UniProtKB"/>
</dbReference>
<dbReference type="GO" id="GO:0042759">
    <property type="term" value="P:long-chain fatty acid biosynthetic process"/>
    <property type="evidence" value="ECO:0000304"/>
    <property type="project" value="Reactome"/>
</dbReference>
<dbReference type="GO" id="GO:0001676">
    <property type="term" value="P:long-chain fatty acid metabolic process"/>
    <property type="evidence" value="ECO:0000314"/>
    <property type="project" value="UniProtKB"/>
</dbReference>
<dbReference type="GO" id="GO:0016098">
    <property type="term" value="P:monoterpenoid metabolic process"/>
    <property type="evidence" value="ECO:0000314"/>
    <property type="project" value="BHF-UCL"/>
</dbReference>
<dbReference type="GO" id="GO:0009617">
    <property type="term" value="P:response to bacterium"/>
    <property type="evidence" value="ECO:0007669"/>
    <property type="project" value="Ensembl"/>
</dbReference>
<dbReference type="GO" id="GO:0008202">
    <property type="term" value="P:steroid metabolic process"/>
    <property type="evidence" value="ECO:0000315"/>
    <property type="project" value="BHF-UCL"/>
</dbReference>
<dbReference type="GO" id="GO:0006805">
    <property type="term" value="P:xenobiotic metabolic process"/>
    <property type="evidence" value="ECO:0000314"/>
    <property type="project" value="BHF-UCL"/>
</dbReference>
<dbReference type="CDD" id="cd20665">
    <property type="entry name" value="CYP2C-like"/>
    <property type="match status" value="1"/>
</dbReference>
<dbReference type="FunFam" id="1.10.630.10:FF:000001">
    <property type="entry name" value="Cytochrome P450, family 2"/>
    <property type="match status" value="1"/>
</dbReference>
<dbReference type="Gene3D" id="1.10.630.10">
    <property type="entry name" value="Cytochrome P450"/>
    <property type="match status" value="1"/>
</dbReference>
<dbReference type="InterPro" id="IPR001128">
    <property type="entry name" value="Cyt_P450"/>
</dbReference>
<dbReference type="InterPro" id="IPR017972">
    <property type="entry name" value="Cyt_P450_CS"/>
</dbReference>
<dbReference type="InterPro" id="IPR002401">
    <property type="entry name" value="Cyt_P450_E_grp-I"/>
</dbReference>
<dbReference type="InterPro" id="IPR008070">
    <property type="entry name" value="Cyt_P450_E_grp-I_CYP2E-like"/>
</dbReference>
<dbReference type="InterPro" id="IPR036396">
    <property type="entry name" value="Cyt_P450_sf"/>
</dbReference>
<dbReference type="InterPro" id="IPR050182">
    <property type="entry name" value="Cytochrome_P450_fam2"/>
</dbReference>
<dbReference type="PANTHER" id="PTHR24300:SF356">
    <property type="entry name" value="CYTOCHROME P450 2E1"/>
    <property type="match status" value="1"/>
</dbReference>
<dbReference type="PANTHER" id="PTHR24300">
    <property type="entry name" value="CYTOCHROME P450 508A4-RELATED"/>
    <property type="match status" value="1"/>
</dbReference>
<dbReference type="Pfam" id="PF00067">
    <property type="entry name" value="p450"/>
    <property type="match status" value="1"/>
</dbReference>
<dbReference type="PRINTS" id="PR00463">
    <property type="entry name" value="EP450I"/>
</dbReference>
<dbReference type="PRINTS" id="PR01687">
    <property type="entry name" value="EP450ICYP2E"/>
</dbReference>
<dbReference type="PRINTS" id="PR00385">
    <property type="entry name" value="P450"/>
</dbReference>
<dbReference type="SUPFAM" id="SSF48264">
    <property type="entry name" value="Cytochrome P450"/>
    <property type="match status" value="1"/>
</dbReference>
<dbReference type="PROSITE" id="PS00086">
    <property type="entry name" value="CYTOCHROME_P450"/>
    <property type="match status" value="1"/>
</dbReference>
<gene>
    <name evidence="9 15" type="primary">CYP2E1</name>
    <name type="synonym">CYP2E</name>
</gene>
<evidence type="ECO:0000250" key="1">
    <source>
        <dbReference type="UniProtKB" id="P05182"/>
    </source>
</evidence>
<evidence type="ECO:0000269" key="2">
    <source>
    </source>
</evidence>
<evidence type="ECO:0000269" key="3">
    <source>
    </source>
</evidence>
<evidence type="ECO:0000269" key="4">
    <source>
    </source>
</evidence>
<evidence type="ECO:0000269" key="5">
    <source>
    </source>
</evidence>
<evidence type="ECO:0000269" key="6">
    <source>
    </source>
</evidence>
<evidence type="ECO:0000269" key="7">
    <source>
    </source>
</evidence>
<evidence type="ECO:0000269" key="8">
    <source ref="4"/>
</evidence>
<evidence type="ECO:0000303" key="9">
    <source>
    </source>
</evidence>
<evidence type="ECO:0000303" key="10">
    <source>
    </source>
</evidence>
<evidence type="ECO:0000305" key="11"/>
<evidence type="ECO:0000305" key="12">
    <source>
    </source>
</evidence>
<evidence type="ECO:0000305" key="13">
    <source>
    </source>
</evidence>
<evidence type="ECO:0000305" key="14">
    <source>
    </source>
</evidence>
<evidence type="ECO:0000312" key="15">
    <source>
        <dbReference type="HGNC" id="HGNC:2631"/>
    </source>
</evidence>
<evidence type="ECO:0007829" key="16">
    <source>
        <dbReference type="PDB" id="3E6I"/>
    </source>
</evidence>
<evidence type="ECO:0007829" key="17">
    <source>
        <dbReference type="PDB" id="3KOH"/>
    </source>
</evidence>
<evidence type="ECO:0007829" key="18">
    <source>
        <dbReference type="PDB" id="3LC4"/>
    </source>
</evidence>
<evidence type="ECO:0007829" key="19">
    <source>
        <dbReference type="PDB" id="3T3Z"/>
    </source>
</evidence>
<comment type="function">
    <text evidence="2 4 14">A cytochrome P450 monooxygenase involved in the metabolism of fatty acids (PubMed:10553002, PubMed:18577768). Mechanistically, uses molecular oxygen inserting one oxygen atom into a substrate, and reducing the second into a water molecule, with two electrons provided by NADPH via cytochrome P450 reductase (NADPH--hemoprotein reductase) (PubMed:10553002, PubMed:18577768). Catalyzes the hydroxylation of carbon-hydrogen bonds. Hydroxylates fatty acids specifically at the omega-1 position displaying the highest catalytic activity for saturated fatty acids (PubMed:10553002, PubMed:18577768). May be involved in the oxidative metabolism of xenobiotics (Probable).</text>
</comment>
<comment type="catalytic activity">
    <reaction evidence="2 4">
        <text>an organic molecule + reduced [NADPH--hemoprotein reductase] + O2 = an alcohol + oxidized [NADPH--hemoprotein reductase] + H2O + H(+)</text>
        <dbReference type="Rhea" id="RHEA:17149"/>
        <dbReference type="Rhea" id="RHEA-COMP:11964"/>
        <dbReference type="Rhea" id="RHEA-COMP:11965"/>
        <dbReference type="ChEBI" id="CHEBI:15377"/>
        <dbReference type="ChEBI" id="CHEBI:15378"/>
        <dbReference type="ChEBI" id="CHEBI:15379"/>
        <dbReference type="ChEBI" id="CHEBI:30879"/>
        <dbReference type="ChEBI" id="CHEBI:57618"/>
        <dbReference type="ChEBI" id="CHEBI:58210"/>
        <dbReference type="ChEBI" id="CHEBI:142491"/>
        <dbReference type="EC" id="1.14.14.1"/>
    </reaction>
    <physiologicalReaction direction="left-to-right" evidence="12 13">
        <dbReference type="Rhea" id="RHEA:17150"/>
    </physiologicalReaction>
</comment>
<comment type="catalytic activity">
    <reaction evidence="4">
        <text>(5Z,8Z,11Z)-eicosatrienoate + reduced [NADPH--hemoprotein reductase] + O2 = 19-hydroxy-(5Z,8Z,11Z)-eicosatrienoate + oxidized [NADPH--hemoprotein reductase] + H2O + H(+)</text>
        <dbReference type="Rhea" id="RHEA:50076"/>
        <dbReference type="Rhea" id="RHEA-COMP:11964"/>
        <dbReference type="Rhea" id="RHEA-COMP:11965"/>
        <dbReference type="ChEBI" id="CHEBI:15377"/>
        <dbReference type="ChEBI" id="CHEBI:15378"/>
        <dbReference type="ChEBI" id="CHEBI:15379"/>
        <dbReference type="ChEBI" id="CHEBI:57618"/>
        <dbReference type="ChEBI" id="CHEBI:58210"/>
        <dbReference type="ChEBI" id="CHEBI:78043"/>
        <dbReference type="ChEBI" id="CHEBI:132024"/>
    </reaction>
    <physiologicalReaction direction="left-to-right" evidence="13">
        <dbReference type="Rhea" id="RHEA:50077"/>
    </physiologicalReaction>
</comment>
<comment type="catalytic activity">
    <reaction evidence="4">
        <text>(5Z,8Z,11Z,14Z,17Z)-eicosapentaenoate + reduced [NADPH--hemoprotein reductase] + O2 = 19-hydroxy-(5Z,8Z,11Z,14Z,17Z)-eicosapentaenoate + oxidized [NADPH--hemoprotein reductase] + H2O + H(+)</text>
        <dbReference type="Rhea" id="RHEA:39787"/>
        <dbReference type="Rhea" id="RHEA-COMP:11964"/>
        <dbReference type="Rhea" id="RHEA-COMP:11965"/>
        <dbReference type="ChEBI" id="CHEBI:15377"/>
        <dbReference type="ChEBI" id="CHEBI:15378"/>
        <dbReference type="ChEBI" id="CHEBI:15379"/>
        <dbReference type="ChEBI" id="CHEBI:57618"/>
        <dbReference type="ChEBI" id="CHEBI:58210"/>
        <dbReference type="ChEBI" id="CHEBI:58562"/>
        <dbReference type="ChEBI" id="CHEBI:76636"/>
    </reaction>
    <physiologicalReaction direction="left-to-right" evidence="13">
        <dbReference type="Rhea" id="RHEA:39788"/>
    </physiologicalReaction>
</comment>
<comment type="catalytic activity">
    <reaction evidence="4">
        <text>(4Z,7Z,10Z,13Z,16Z,19Z)-docosahexaenoate + reduced [NADPH--hemoprotein reductase] + O2 = 21-hydroxy-(4Z,7Z,10Z,13Z,16Z,19Z)-docosahexaenoate + oxidized [NADPH--hemoprotein reductase] + H2O + H(+)</text>
        <dbReference type="Rhea" id="RHEA:50088"/>
        <dbReference type="Rhea" id="RHEA-COMP:11964"/>
        <dbReference type="Rhea" id="RHEA-COMP:11965"/>
        <dbReference type="ChEBI" id="CHEBI:15377"/>
        <dbReference type="ChEBI" id="CHEBI:15378"/>
        <dbReference type="ChEBI" id="CHEBI:15379"/>
        <dbReference type="ChEBI" id="CHEBI:57618"/>
        <dbReference type="ChEBI" id="CHEBI:58210"/>
        <dbReference type="ChEBI" id="CHEBI:77016"/>
        <dbReference type="ChEBI" id="CHEBI:132025"/>
    </reaction>
    <physiologicalReaction direction="left-to-right" evidence="13">
        <dbReference type="Rhea" id="RHEA:50089"/>
    </physiologicalReaction>
</comment>
<comment type="catalytic activity">
    <reaction evidence="2">
        <text>dodecanoate + reduced [NADPH--hemoprotein reductase] + O2 = 11-hydroxydodecanoate + oxidized [NADPH--hemoprotein reductase] + H2O + H(+)</text>
        <dbReference type="Rhea" id="RHEA:39751"/>
        <dbReference type="Rhea" id="RHEA-COMP:11964"/>
        <dbReference type="Rhea" id="RHEA-COMP:11965"/>
        <dbReference type="ChEBI" id="CHEBI:15377"/>
        <dbReference type="ChEBI" id="CHEBI:15378"/>
        <dbReference type="ChEBI" id="CHEBI:15379"/>
        <dbReference type="ChEBI" id="CHEBI:18262"/>
        <dbReference type="ChEBI" id="CHEBI:57618"/>
        <dbReference type="ChEBI" id="CHEBI:58210"/>
        <dbReference type="ChEBI" id="CHEBI:76628"/>
    </reaction>
    <physiologicalReaction direction="left-to-right" evidence="12">
        <dbReference type="Rhea" id="RHEA:39752"/>
    </physiologicalReaction>
</comment>
<comment type="catalytic activity">
    <reaction evidence="2">
        <text>tetradecanoate + reduced [NADPH--hemoprotein reductase] + O2 = 13-hydroxytetradecanoate + oxidized [NADPH--hemoprotein reductase] + H2O + H(+)</text>
        <dbReference type="Rhea" id="RHEA:50096"/>
        <dbReference type="Rhea" id="RHEA-COMP:11964"/>
        <dbReference type="Rhea" id="RHEA-COMP:11965"/>
        <dbReference type="ChEBI" id="CHEBI:15377"/>
        <dbReference type="ChEBI" id="CHEBI:15378"/>
        <dbReference type="ChEBI" id="CHEBI:15379"/>
        <dbReference type="ChEBI" id="CHEBI:30807"/>
        <dbReference type="ChEBI" id="CHEBI:57618"/>
        <dbReference type="ChEBI" id="CHEBI:58210"/>
        <dbReference type="ChEBI" id="CHEBI:132031"/>
    </reaction>
    <physiologicalReaction direction="left-to-right" evidence="12">
        <dbReference type="Rhea" id="RHEA:50097"/>
    </physiologicalReaction>
</comment>
<comment type="catalytic activity">
    <reaction evidence="6">
        <text>4-nitrophenol + NADPH + O2 + H(+) = 4-nitrocatechol + NADP(+) + H2O</text>
        <dbReference type="Rhea" id="RHEA:26205"/>
        <dbReference type="ChEBI" id="CHEBI:15377"/>
        <dbReference type="ChEBI" id="CHEBI:15378"/>
        <dbReference type="ChEBI" id="CHEBI:15379"/>
        <dbReference type="ChEBI" id="CHEBI:57730"/>
        <dbReference type="ChEBI" id="CHEBI:57783"/>
        <dbReference type="ChEBI" id="CHEBI:57917"/>
        <dbReference type="ChEBI" id="CHEBI:58349"/>
        <dbReference type="EC" id="1.14.13.n7"/>
    </reaction>
</comment>
<comment type="cofactor">
    <cofactor>
        <name>heme</name>
        <dbReference type="ChEBI" id="CHEBI:30413"/>
    </cofactor>
</comment>
<comment type="activity regulation">
    <text evidence="2">The omega-1 hydroxylase activity is stimulated by cytochrome b5.</text>
</comment>
<comment type="pathway">
    <text evidence="2 4">Lipid metabolism; fatty acid metabolism.</text>
</comment>
<comment type="subunit">
    <text evidence="1">Interacts with chaperones HSP70 and HSP90; this interaction is required for initial targeting to mitochondria.</text>
</comment>
<comment type="subcellular location">
    <subcellularLocation>
        <location evidence="1">Endoplasmic reticulum membrane</location>
        <topology evidence="1">Peripheral membrane protein</topology>
    </subcellularLocation>
    <subcellularLocation>
        <location evidence="1">Microsome membrane</location>
        <topology evidence="1">Peripheral membrane protein</topology>
    </subcellularLocation>
    <subcellularLocation>
        <location evidence="1">Mitochondrion inner membrane</location>
        <topology evidence="1">Peripheral membrane protein</topology>
    </subcellularLocation>
    <text evidence="1">Post-translationally targeted to mitochondria. TOMM70 is required for the translocation across the mitochondrial outer membrane. After translocation into the matrix, associates with the inner membrane as a membrane extrinsic protein.</text>
</comment>
<comment type="induction">
    <text>By ethanol and isoniazid.</text>
</comment>
<comment type="similarity">
    <text evidence="11">Belongs to the cytochrome P450 family.</text>
</comment>
<comment type="online information" name="PharmVar Pharmacogen Variation Consortium">
    <link uri="https://www.pharmvar.org/gene/CYP2E1"/>
    <text>CYP2E1 alleles</text>
</comment>
<comment type="online information" name="Wikipedia">
    <link uri="https://en.wikipedia.org/wiki/CYP2E1"/>
    <text>CYP2E1 entry</text>
</comment>
<organism>
    <name type="scientific">Homo sapiens</name>
    <name type="common">Human</name>
    <dbReference type="NCBI Taxonomy" id="9606"/>
    <lineage>
        <taxon>Eukaryota</taxon>
        <taxon>Metazoa</taxon>
        <taxon>Chordata</taxon>
        <taxon>Craniata</taxon>
        <taxon>Vertebrata</taxon>
        <taxon>Euteleostomi</taxon>
        <taxon>Mammalia</taxon>
        <taxon>Eutheria</taxon>
        <taxon>Euarchontoglires</taxon>
        <taxon>Primates</taxon>
        <taxon>Haplorrhini</taxon>
        <taxon>Catarrhini</taxon>
        <taxon>Hominidae</taxon>
        <taxon>Homo</taxon>
    </lineage>
</organism>
<accession>P05181</accession>
<accession>Q5VZD5</accession>
<accession>Q6NWT9</accession>
<accession>Q9UK47</accession>
<name>CP2E1_HUMAN</name>
<feature type="chain" id="PRO_0000051751" description="Cytochrome P450 2E1">
    <location>
        <begin position="1"/>
        <end position="493"/>
    </location>
</feature>
<feature type="binding site" evidence="11">
    <location>
        <begin position="298"/>
        <end position="303"/>
    </location>
    <ligand>
        <name>substrate</name>
    </ligand>
</feature>
<feature type="binding site" description="axial binding residue">
    <location>
        <position position="437"/>
    </location>
    <ligand>
        <name>heme</name>
        <dbReference type="ChEBI" id="CHEBI:30413"/>
    </ligand>
    <ligandPart>
        <name>Fe</name>
        <dbReference type="ChEBI" id="CHEBI:18248"/>
    </ligandPart>
</feature>
<feature type="sequence variant" id="VAR_008360" description="In allele CYP2E1*2; reduced activity; dbSNP:rs72559710." evidence="5">
    <original>R</original>
    <variation>H</variation>
    <location>
        <position position="76"/>
    </location>
</feature>
<feature type="sequence variant" id="VAR_008361" description="In allele CYP2E1*4; dbSNP:rs6413419." evidence="3 7">
    <original>V</original>
    <variation>I</variation>
    <location>
        <position position="179"/>
    </location>
</feature>
<feature type="sequence variant" id="VAR_055382" description="In dbSNP:rs41299426." evidence="8">
    <original>N</original>
    <variation>D</variation>
    <location>
        <position position="219"/>
    </location>
</feature>
<feature type="sequence variant" id="VAR_055383" description="In dbSNP:rs41299434." evidence="8">
    <original>S</original>
    <variation>C</variation>
    <location>
        <position position="366"/>
    </location>
</feature>
<feature type="sequence variant" id="VAR_008362" description="In allele CYP2E1*3; dbSNP:rs55897648." evidence="5">
    <original>V</original>
    <variation>I</variation>
    <location>
        <position position="389"/>
    </location>
</feature>
<feature type="sequence variant" id="VAR_024727" description="In dbSNP:rs28969387." evidence="3 8">
    <original>H</original>
    <variation>L</variation>
    <location>
        <position position="457"/>
    </location>
</feature>
<feature type="sequence conflict" description="In Ref. 10; AA sequence." evidence="11" ref="10">
    <location>
        <position position="2"/>
    </location>
</feature>
<feature type="sequence conflict" description="In Ref. 12; AA sequence." evidence="11" ref="12">
    <original>W</original>
    <variation>A</variation>
    <location>
        <position position="23"/>
    </location>
</feature>
<feature type="sequence conflict" description="In Ref. 12; AA sequence." evidence="11" ref="12">
    <original>L</original>
    <variation>N</variation>
    <location>
        <position position="32"/>
    </location>
</feature>
<feature type="sequence conflict" description="In Ref. 7; AAH67433." evidence="11" ref="7">
    <original>Y</original>
    <variation>C</variation>
    <location>
        <position position="71"/>
    </location>
</feature>
<feature type="sequence conflict" description="In Ref. 3; AAF13601." evidence="11" ref="3">
    <original>V</original>
    <variation>A</variation>
    <location>
        <position position="235"/>
    </location>
</feature>
<feature type="sequence conflict" description="In Ref. 7; AAH67433." evidence="11" ref="7">
    <original>H</original>
    <variation>R</variation>
    <location>
        <position position="355"/>
    </location>
</feature>
<feature type="turn" evidence="16">
    <location>
        <begin position="40"/>
        <end position="42"/>
    </location>
</feature>
<feature type="helix" evidence="16">
    <location>
        <begin position="45"/>
        <end position="47"/>
    </location>
</feature>
<feature type="helix" evidence="19">
    <location>
        <begin position="50"/>
        <end position="52"/>
    </location>
</feature>
<feature type="helix" evidence="16">
    <location>
        <begin position="53"/>
        <end position="64"/>
    </location>
</feature>
<feature type="strand" evidence="16">
    <location>
        <begin position="66"/>
        <end position="72"/>
    </location>
</feature>
<feature type="strand" evidence="16">
    <location>
        <begin position="75"/>
        <end position="80"/>
    </location>
</feature>
<feature type="helix" evidence="16">
    <location>
        <begin position="83"/>
        <end position="91"/>
    </location>
</feature>
<feature type="turn" evidence="16">
    <location>
        <begin position="94"/>
        <end position="97"/>
    </location>
</feature>
<feature type="helix" evidence="16">
    <location>
        <begin position="104"/>
        <end position="109"/>
    </location>
</feature>
<feature type="strand" evidence="16">
    <location>
        <begin position="112"/>
        <end position="114"/>
    </location>
</feature>
<feature type="helix" evidence="16">
    <location>
        <begin position="122"/>
        <end position="135"/>
    </location>
</feature>
<feature type="helix" evidence="16">
    <location>
        <begin position="142"/>
        <end position="159"/>
    </location>
</feature>
<feature type="turn" evidence="16">
    <location>
        <begin position="160"/>
        <end position="163"/>
    </location>
</feature>
<feature type="helix" evidence="16">
    <location>
        <begin position="169"/>
        <end position="172"/>
    </location>
</feature>
<feature type="helix" evidence="16">
    <location>
        <begin position="174"/>
        <end position="185"/>
    </location>
</feature>
<feature type="helix" evidence="16">
    <location>
        <begin position="194"/>
        <end position="209"/>
    </location>
</feature>
<feature type="helix" evidence="16">
    <location>
        <begin position="213"/>
        <end position="220"/>
    </location>
</feature>
<feature type="helix" evidence="16">
    <location>
        <begin position="222"/>
        <end position="225"/>
    </location>
</feature>
<feature type="strand" evidence="19">
    <location>
        <begin position="228"/>
        <end position="230"/>
    </location>
</feature>
<feature type="helix" evidence="16">
    <location>
        <begin position="231"/>
        <end position="255"/>
    </location>
</feature>
<feature type="strand" evidence="17">
    <location>
        <begin position="259"/>
        <end position="261"/>
    </location>
</feature>
<feature type="helix" evidence="16">
    <location>
        <begin position="265"/>
        <end position="274"/>
    </location>
</feature>
<feature type="strand" evidence="16">
    <location>
        <begin position="275"/>
        <end position="278"/>
    </location>
</feature>
<feature type="strand" evidence="19">
    <location>
        <begin position="279"/>
        <end position="281"/>
    </location>
</feature>
<feature type="helix" evidence="16">
    <location>
        <begin position="286"/>
        <end position="317"/>
    </location>
</feature>
<feature type="helix" evidence="16">
    <location>
        <begin position="319"/>
        <end position="332"/>
    </location>
</feature>
<feature type="turn" evidence="16">
    <location>
        <begin position="333"/>
        <end position="336"/>
    </location>
</feature>
<feature type="helix" evidence="16">
    <location>
        <begin position="341"/>
        <end position="346"/>
    </location>
</feature>
<feature type="helix" evidence="16">
    <location>
        <begin position="348"/>
        <end position="361"/>
    </location>
</feature>
<feature type="strand" evidence="16">
    <location>
        <begin position="376"/>
        <end position="378"/>
    </location>
</feature>
<feature type="strand" evidence="16">
    <location>
        <begin position="381"/>
        <end position="383"/>
    </location>
</feature>
<feature type="strand" evidence="16">
    <location>
        <begin position="388"/>
        <end position="391"/>
    </location>
</feature>
<feature type="helix" evidence="16">
    <location>
        <begin position="394"/>
        <end position="397"/>
    </location>
</feature>
<feature type="turn" evidence="16">
    <location>
        <begin position="400"/>
        <end position="402"/>
    </location>
</feature>
<feature type="strand" evidence="16">
    <location>
        <begin position="403"/>
        <end position="405"/>
    </location>
</feature>
<feature type="helix" evidence="16">
    <location>
        <begin position="411"/>
        <end position="414"/>
    </location>
</feature>
<feature type="strand" evidence="16">
    <location>
        <begin position="419"/>
        <end position="421"/>
    </location>
</feature>
<feature type="helix" evidence="18">
    <location>
        <begin position="433"/>
        <end position="435"/>
    </location>
</feature>
<feature type="helix" evidence="16">
    <location>
        <begin position="440"/>
        <end position="457"/>
    </location>
</feature>
<feature type="strand" evidence="16">
    <location>
        <begin position="458"/>
        <end position="464"/>
    </location>
</feature>
<feature type="turn" evidence="16">
    <location>
        <begin position="466"/>
        <end position="468"/>
    </location>
</feature>
<feature type="strand" evidence="16">
    <location>
        <begin position="474"/>
        <end position="481"/>
    </location>
</feature>
<feature type="strand" evidence="16">
    <location>
        <begin position="487"/>
        <end position="491"/>
    </location>
</feature>
<protein>
    <recommendedName>
        <fullName evidence="10">Cytochrome P450 2E1</fullName>
        <ecNumber evidence="2 4">1.14.14.1</ecNumber>
    </recommendedName>
    <alternativeName>
        <fullName>4-nitrophenol 2-hydroxylase</fullName>
        <ecNumber evidence="6">1.14.13.n7</ecNumber>
    </alternativeName>
    <alternativeName>
        <fullName>CYPIIE1</fullName>
    </alternativeName>
    <alternativeName>
        <fullName>Cytochrome P450-J</fullName>
    </alternativeName>
</protein>
<reference key="1">
    <citation type="journal article" date="1986" name="J. Biol. Chem.">
        <title>Complementary DNA and protein sequences of ethanol-inducible rat and human cytochrome P-450s. Transcriptional and post-transcriptional regulation of the rat enzyme.</title>
        <authorList>
            <person name="Song B.-J."/>
            <person name="Gelboin H.V."/>
            <person name="Park S.-S."/>
            <person name="Yang C.S."/>
            <person name="Gonzalez F.J."/>
        </authorList>
    </citation>
    <scope>NUCLEOTIDE SEQUENCE [MRNA]</scope>
</reference>
<reference key="2">
    <citation type="journal article" date="1988" name="Biochemistry">
        <title>Human ethanol-inducible P450IIE1: complete gene sequence, promoter characterization, chromosome mapping, and cDNA-directed expression.</title>
        <authorList>
            <person name="Umeno M."/>
            <person name="McBride O.W."/>
            <person name="Yang C.S."/>
            <person name="Gelboin H.V."/>
            <person name="Gonzalez F.J."/>
        </authorList>
    </citation>
    <scope>NUCLEOTIDE SEQUENCE [GENOMIC DNA]</scope>
</reference>
<reference key="3">
    <citation type="submission" date="1999-09" db="EMBL/GenBank/DDBJ databases">
        <title>Sequence of a new human cytochrome P450-2E1 cDNA and establishing the transgenic cell line.</title>
        <authorList>
            <person name="Zhuge J."/>
            <person name="Qian Y."/>
            <person name="Xie H."/>
            <person name="Yu Y."/>
        </authorList>
    </citation>
    <scope>NUCLEOTIDE SEQUENCE [MRNA]</scope>
    <source>
        <tissue>Liver</tissue>
    </source>
</reference>
<reference key="4">
    <citation type="submission" date="2006-04" db="EMBL/GenBank/DDBJ databases">
        <authorList>
            <consortium name="NIEHS SNPs program"/>
        </authorList>
    </citation>
    <scope>NUCLEOTIDE SEQUENCE [GENOMIC DNA]</scope>
    <scope>VARIANTS ASP-219; CYS-366 AND LEU-457</scope>
</reference>
<reference key="5">
    <citation type="journal article" date="2004" name="Nature">
        <title>The DNA sequence and comparative analysis of human chromosome 10.</title>
        <authorList>
            <person name="Deloukas P."/>
            <person name="Earthrowl M.E."/>
            <person name="Grafham D.V."/>
            <person name="Rubenfield M."/>
            <person name="French L."/>
            <person name="Steward C.A."/>
            <person name="Sims S.K."/>
            <person name="Jones M.C."/>
            <person name="Searle S."/>
            <person name="Scott C."/>
            <person name="Howe K."/>
            <person name="Hunt S.E."/>
            <person name="Andrews T.D."/>
            <person name="Gilbert J.G.R."/>
            <person name="Swarbreck D."/>
            <person name="Ashurst J.L."/>
            <person name="Taylor A."/>
            <person name="Battles J."/>
            <person name="Bird C.P."/>
            <person name="Ainscough R."/>
            <person name="Almeida J.P."/>
            <person name="Ashwell R.I.S."/>
            <person name="Ambrose K.D."/>
            <person name="Babbage A.K."/>
            <person name="Bagguley C.L."/>
            <person name="Bailey J."/>
            <person name="Banerjee R."/>
            <person name="Bates K."/>
            <person name="Beasley H."/>
            <person name="Bray-Allen S."/>
            <person name="Brown A.J."/>
            <person name="Brown J.Y."/>
            <person name="Burford D.C."/>
            <person name="Burrill W."/>
            <person name="Burton J."/>
            <person name="Cahill P."/>
            <person name="Camire D."/>
            <person name="Carter N.P."/>
            <person name="Chapman J.C."/>
            <person name="Clark S.Y."/>
            <person name="Clarke G."/>
            <person name="Clee C.M."/>
            <person name="Clegg S."/>
            <person name="Corby N."/>
            <person name="Coulson A."/>
            <person name="Dhami P."/>
            <person name="Dutta I."/>
            <person name="Dunn M."/>
            <person name="Faulkner L."/>
            <person name="Frankish A."/>
            <person name="Frankland J.A."/>
            <person name="Garner P."/>
            <person name="Garnett J."/>
            <person name="Gribble S."/>
            <person name="Griffiths C."/>
            <person name="Grocock R."/>
            <person name="Gustafson E."/>
            <person name="Hammond S."/>
            <person name="Harley J.L."/>
            <person name="Hart E."/>
            <person name="Heath P.D."/>
            <person name="Ho T.P."/>
            <person name="Hopkins B."/>
            <person name="Horne J."/>
            <person name="Howden P.J."/>
            <person name="Huckle E."/>
            <person name="Hynds C."/>
            <person name="Johnson C."/>
            <person name="Johnson D."/>
            <person name="Kana A."/>
            <person name="Kay M."/>
            <person name="Kimberley A.M."/>
            <person name="Kershaw J.K."/>
            <person name="Kokkinaki M."/>
            <person name="Laird G.K."/>
            <person name="Lawlor S."/>
            <person name="Lee H.M."/>
            <person name="Leongamornlert D.A."/>
            <person name="Laird G."/>
            <person name="Lloyd C."/>
            <person name="Lloyd D.M."/>
            <person name="Loveland J."/>
            <person name="Lovell J."/>
            <person name="McLaren S."/>
            <person name="McLay K.E."/>
            <person name="McMurray A."/>
            <person name="Mashreghi-Mohammadi M."/>
            <person name="Matthews L."/>
            <person name="Milne S."/>
            <person name="Nickerson T."/>
            <person name="Nguyen M."/>
            <person name="Overton-Larty E."/>
            <person name="Palmer S.A."/>
            <person name="Pearce A.V."/>
            <person name="Peck A.I."/>
            <person name="Pelan S."/>
            <person name="Phillimore B."/>
            <person name="Porter K."/>
            <person name="Rice C.M."/>
            <person name="Rogosin A."/>
            <person name="Ross M.T."/>
            <person name="Sarafidou T."/>
            <person name="Sehra H.K."/>
            <person name="Shownkeen R."/>
            <person name="Skuce C.D."/>
            <person name="Smith M."/>
            <person name="Standring L."/>
            <person name="Sycamore N."/>
            <person name="Tester J."/>
            <person name="Thorpe A."/>
            <person name="Torcasso W."/>
            <person name="Tracey A."/>
            <person name="Tromans A."/>
            <person name="Tsolas J."/>
            <person name="Wall M."/>
            <person name="Walsh J."/>
            <person name="Wang H."/>
            <person name="Weinstock K."/>
            <person name="West A.P."/>
            <person name="Willey D.L."/>
            <person name="Whitehead S.L."/>
            <person name="Wilming L."/>
            <person name="Wray P.W."/>
            <person name="Young L."/>
            <person name="Chen Y."/>
            <person name="Lovering R.C."/>
            <person name="Moschonas N.K."/>
            <person name="Siebert R."/>
            <person name="Fechtel K."/>
            <person name="Bentley D."/>
            <person name="Durbin R.M."/>
            <person name="Hubbard T."/>
            <person name="Doucette-Stamm L."/>
            <person name="Beck S."/>
            <person name="Smith D.R."/>
            <person name="Rogers J."/>
        </authorList>
    </citation>
    <scope>NUCLEOTIDE SEQUENCE [LARGE SCALE GENOMIC DNA]</scope>
</reference>
<reference key="6">
    <citation type="submission" date="2005-09" db="EMBL/GenBank/DDBJ databases">
        <authorList>
            <person name="Mural R.J."/>
            <person name="Istrail S."/>
            <person name="Sutton G.G."/>
            <person name="Florea L."/>
            <person name="Halpern A.L."/>
            <person name="Mobarry C.M."/>
            <person name="Lippert R."/>
            <person name="Walenz B."/>
            <person name="Shatkay H."/>
            <person name="Dew I."/>
            <person name="Miller J.R."/>
            <person name="Flanigan M.J."/>
            <person name="Edwards N.J."/>
            <person name="Bolanos R."/>
            <person name="Fasulo D."/>
            <person name="Halldorsson B.V."/>
            <person name="Hannenhalli S."/>
            <person name="Turner R."/>
            <person name="Yooseph S."/>
            <person name="Lu F."/>
            <person name="Nusskern D.R."/>
            <person name="Shue B.C."/>
            <person name="Zheng X.H."/>
            <person name="Zhong F."/>
            <person name="Delcher A.L."/>
            <person name="Huson D.H."/>
            <person name="Kravitz S.A."/>
            <person name="Mouchard L."/>
            <person name="Reinert K."/>
            <person name="Remington K.A."/>
            <person name="Clark A.G."/>
            <person name="Waterman M.S."/>
            <person name="Eichler E.E."/>
            <person name="Adams M.D."/>
            <person name="Hunkapiller M.W."/>
            <person name="Myers E.W."/>
            <person name="Venter J.C."/>
        </authorList>
    </citation>
    <scope>NUCLEOTIDE SEQUENCE [LARGE SCALE GENOMIC DNA]</scope>
</reference>
<reference key="7">
    <citation type="journal article" date="2004" name="Genome Res.">
        <title>The status, quality, and expansion of the NIH full-length cDNA project: the Mammalian Gene Collection (MGC).</title>
        <authorList>
            <consortium name="The MGC Project Team"/>
        </authorList>
    </citation>
    <scope>NUCLEOTIDE SEQUENCE [LARGE SCALE MRNA]</scope>
</reference>
<reference key="8">
    <citation type="submission" date="1998-08" db="EMBL/GenBank/DDBJ databases">
        <title>Partial sequence of human brain cytochrome P450 2E1.</title>
        <authorList>
            <person name="Yoo M."/>
            <person name="Shin S.W."/>
        </authorList>
    </citation>
    <scope>NUCLEOTIDE SEQUENCE [MRNA] OF 32-493</scope>
    <source>
        <tissue>Brain</tissue>
    </source>
</reference>
<reference key="9">
    <citation type="submission" date="1995-04" db="EMBL/GenBank/DDBJ databases">
        <title>Rapid detection of a novel mutation in the human CYP2EI exon VIII by the PCR method.</title>
        <authorList>
            <person name="Iwahashi K."/>
            <person name="Okuyama E."/>
            <person name="Nakamura K."/>
            <person name="Furukawa A."/>
            <person name="Ichikawa Y."/>
        </authorList>
    </citation>
    <scope>NUCLEOTIDE SEQUENCE [GENOMIC DNA] OF 387-432</scope>
</reference>
<reference key="10">
    <citation type="journal article" date="1987" name="Biochem. Biophys. Res. Commun.">
        <title>Purification and characterization of human liver cytochrome P-450-ALC.</title>
        <authorList>
            <person name="Lasker J.M."/>
            <person name="Raucy J."/>
            <person name="Kubota S."/>
            <person name="Bloswick B.P."/>
            <person name="Black M."/>
            <person name="Lieber C.S."/>
        </authorList>
    </citation>
    <scope>PROTEIN SEQUENCE OF 1-20</scope>
    <source>
        <tissue>Liver</tissue>
    </source>
</reference>
<reference key="11">
    <citation type="journal article" date="1989" name="Pharmacology">
        <title>Human liver cytochrome P-450 related to a rat acetone-inducible, nitrosamine-metabolizing cytochrome P-450: identification and isolation.</title>
        <authorList>
            <person name="Robinson R.C."/>
            <person name="Shorr R.G."/>
            <person name="Varrichio A."/>
            <person name="Park S.S."/>
            <person name="Gelboin H.V."/>
            <person name="Miller H."/>
            <person name="Friedman F.K."/>
        </authorList>
    </citation>
    <scope>PROTEIN SEQUENCE OF 3-20</scope>
</reference>
<reference key="12">
    <citation type="journal article" date="1994" name="Arch. Biochem. Biophys.">
        <title>Expression of modified human cytochrome P450 2E1 in Escherichia coli, purification, and spectral and catalytic properties.</title>
        <authorList>
            <person name="Gillam E.M."/>
            <person name="Guo Z."/>
            <person name="Guengerich F.P."/>
        </authorList>
    </citation>
    <scope>PROTEIN SEQUENCE OF 23-42</scope>
</reference>
<reference key="13">
    <citation type="journal article" date="1997" name="Chem. Res. Toxicol.">
        <title>Both cytochromes P450 2E1 and 3A are involved in the O-hydroxylation of p-nitrophenol, a catalytic activity known to be specific for P450 2E1.</title>
        <authorList>
            <person name="Zerilli A."/>
            <person name="Ratanasavanh D."/>
            <person name="Lucas D."/>
            <person name="Goasduff T."/>
            <person name="Dreano Y."/>
            <person name="Menard C."/>
            <person name="Picart D."/>
            <person name="Berthou F."/>
        </authorList>
    </citation>
    <scope>FUNCTION</scope>
    <scope>CATALYTIC ACTIVITY</scope>
</reference>
<reference key="14">
    <citation type="journal article" date="1999" name="J. Lipid Res.">
        <title>Requirement for omega and (omega;-1)-hydroxylations of fatty acids by human cytochromes P450 2E1 and 4A11.</title>
        <authorList>
            <person name="Adas F."/>
            <person name="Salauen J.P."/>
            <person name="Berthou F."/>
            <person name="Picart D."/>
            <person name="Simon B."/>
            <person name="Amet Y."/>
        </authorList>
    </citation>
    <scope>FUNCTION</scope>
    <scope>CATALYTIC ACTIVITY</scope>
    <scope>PATHWAY</scope>
    <scope>ACTIVITY REGULATION</scope>
</reference>
<reference key="15">
    <citation type="journal article" date="2008" name="J. Lipid Res.">
        <title>Cytochromes P450 from family 4 are the main omega hydroxylating enzymes in humans: CYP4F3B is the prominent player in PUFA metabolism.</title>
        <authorList>
            <person name="Fer M."/>
            <person name="Corcos L."/>
            <person name="Dreano Y."/>
            <person name="Plee-Gautier E."/>
            <person name="Salaun J.P."/>
            <person name="Berthou F."/>
            <person name="Amet Y."/>
        </authorList>
    </citation>
    <scope>FUNCTION</scope>
    <scope>CATALYTIC ACTIVITY</scope>
    <scope>PATHWAY</scope>
</reference>
<reference key="16">
    <citation type="journal article" date="2014" name="J. Proteomics">
        <title>An enzyme assisted RP-RPLC approach for in-depth analysis of human liver phosphoproteome.</title>
        <authorList>
            <person name="Bian Y."/>
            <person name="Song C."/>
            <person name="Cheng K."/>
            <person name="Dong M."/>
            <person name="Wang F."/>
            <person name="Huang J."/>
            <person name="Sun D."/>
            <person name="Wang L."/>
            <person name="Ye M."/>
            <person name="Zou H."/>
        </authorList>
    </citation>
    <scope>IDENTIFICATION BY MASS SPECTROMETRY [LARGE SCALE ANALYSIS]</scope>
    <source>
        <tissue>Liver</tissue>
    </source>
</reference>
<reference key="17">
    <citation type="journal article" date="2008" name="J. Biol. Chem.">
        <title>Structures of human cytochrome P-450 2E1. Insights into the binding of inhibitors and both small molecular weight and fatty acid substrates.</title>
        <authorList>
            <person name="Porubsky P.R."/>
            <person name="Meneely K.M."/>
            <person name="Scott E.E."/>
        </authorList>
    </citation>
    <scope>X-RAY CRYSTALLOGRAPHY (2.2 ANGSTROMS) OF 32-493 IN COMPLEX WITH THE INHIBITORS INDAZOLE AND 4-METHYLPYRAZOLE AND HEME</scope>
</reference>
<reference key="18">
    <citation type="journal article" date="1997" name="Mol. Pharmacol.">
        <title>Genetic polymorphism of human CYP2E1: characterization of two variant alleles.</title>
        <authorList>
            <person name="Hu Y."/>
            <person name="Oscarson M."/>
            <person name="Johansson I."/>
            <person name="Yue Q.Y."/>
            <person name="Dahl M.L."/>
            <person name="Tabone M."/>
            <person name="Arinco S."/>
            <person name="Albano E."/>
            <person name="Ingelman-Sundberg M."/>
        </authorList>
    </citation>
    <scope>VARIANTS HIS-76 AND ILE-389</scope>
</reference>
<reference key="19">
    <citation type="journal article" date="1998" name="Pharmacogenetics">
        <title>Detection and characterization of novel polymorphisms in the CYP2E1 gene.</title>
        <authorList>
            <person name="Fairbrother K.S."/>
            <person name="Grove J."/>
            <person name="de Waziers I."/>
            <person name="Steimel D.T."/>
            <person name="Day C.P."/>
            <person name="Crespi C.L."/>
            <person name="Daly A.K."/>
        </authorList>
    </citation>
    <scope>VARIANT ILE-179</scope>
</reference>
<reference key="20">
    <citation type="journal article" date="2004" name="Pharmacogenomics">
        <title>Genetic variation in eleven phase I drug metabolism genes in an ethnically diverse population.</title>
        <authorList>
            <person name="Solus J.F."/>
            <person name="Arietta B.J."/>
            <person name="Harris J.R."/>
            <person name="Sexton D.P."/>
            <person name="Steward J.Q."/>
            <person name="McMunn C."/>
            <person name="Ihrie P."/>
            <person name="Mehall J.M."/>
            <person name="Edwards T.L."/>
            <person name="Dawson E.P."/>
        </authorList>
    </citation>
    <scope>VARIANTS ILE-179 AND LEU-457</scope>
</reference>
<keyword id="KW-0002">3D-structure</keyword>
<keyword id="KW-0903">Direct protein sequencing</keyword>
<keyword id="KW-0256">Endoplasmic reticulum</keyword>
<keyword id="KW-0276">Fatty acid metabolism</keyword>
<keyword id="KW-0349">Heme</keyword>
<keyword id="KW-0408">Iron</keyword>
<keyword id="KW-0443">Lipid metabolism</keyword>
<keyword id="KW-0472">Membrane</keyword>
<keyword id="KW-0479">Metal-binding</keyword>
<keyword id="KW-0492">Microsome</keyword>
<keyword id="KW-0496">Mitochondrion</keyword>
<keyword id="KW-0999">Mitochondrion inner membrane</keyword>
<keyword id="KW-0503">Monooxygenase</keyword>
<keyword id="KW-0521">NADP</keyword>
<keyword id="KW-0560">Oxidoreductase</keyword>
<keyword id="KW-1267">Proteomics identification</keyword>
<keyword id="KW-1185">Reference proteome</keyword>